<sequence>MLQATCARIARRFVWRNRMPRRLFIGLFLLPLPLFAAPPKDELAYAVGARLGMRLQQEMPGLELSELLLGLRQAYRGEALEIPPERIEQLLLQHENATTETPRTTPAEARFLANEKARFGVRELTGGVLVSELRRGQGNGIGAATQVHVRYRGLLADGQVFDQSESAEWFALDSVIEGWRTALRAMPVGARWRVVIPSAQAYGHEGAGDLIPPDAPLVFEIDLLGFR</sequence>
<name>FKBZ_PSEAE</name>
<keyword id="KW-0413">Isomerase</keyword>
<keyword id="KW-1185">Reference proteome</keyword>
<keyword id="KW-0697">Rotamase</keyword>
<reference key="1">
    <citation type="journal article" date="1989" name="Gene">
        <title>Nucleotide sequence of a regulatory region controlling alginate synthesis in Pseudomonas aeruginosa: characterization of the algR2 gene.</title>
        <authorList>
            <person name="Kato J."/>
            <person name="Chu L."/>
            <person name="Kitano K."/>
            <person name="Devault J.D."/>
            <person name="Kimbara K."/>
            <person name="Chakrabarty A.M."/>
            <person name="Misra T.K."/>
        </authorList>
    </citation>
    <scope>NUCLEOTIDE SEQUENCE [GENOMIC DNA]</scope>
</reference>
<reference key="2">
    <citation type="journal article" date="1990" name="J. Bacteriol.">
        <title>DNA sequence and expression analysis of algP and algQ, components of the multigene system transcriptionally regulating mucoidy in Pseudomonas aeruginosa: algP contains multiple direct repeats.</title>
        <authorList>
            <person name="Konyecsni W.M."/>
            <person name="Deretic V."/>
        </authorList>
    </citation>
    <scope>NUCLEOTIDE SEQUENCE [GENOMIC DNA]</scope>
    <source>
        <strain>PAO / PA02003</strain>
    </source>
</reference>
<reference key="3">
    <citation type="journal article" date="2000" name="Nature">
        <title>Complete genome sequence of Pseudomonas aeruginosa PAO1, an opportunistic pathogen.</title>
        <authorList>
            <person name="Stover C.K."/>
            <person name="Pham X.-Q.T."/>
            <person name="Erwin A.L."/>
            <person name="Mizoguchi S.D."/>
            <person name="Warrener P."/>
            <person name="Hickey M.J."/>
            <person name="Brinkman F.S.L."/>
            <person name="Hufnagle W.O."/>
            <person name="Kowalik D.J."/>
            <person name="Lagrou M."/>
            <person name="Garber R.L."/>
            <person name="Goltry L."/>
            <person name="Tolentino E."/>
            <person name="Westbrock-Wadman S."/>
            <person name="Yuan Y."/>
            <person name="Brody L.L."/>
            <person name="Coulter S.N."/>
            <person name="Folger K.R."/>
            <person name="Kas A."/>
            <person name="Larbig K."/>
            <person name="Lim R.M."/>
            <person name="Smith K.A."/>
            <person name="Spencer D.H."/>
            <person name="Wong G.K.-S."/>
            <person name="Wu Z."/>
            <person name="Paulsen I.T."/>
            <person name="Reizer J."/>
            <person name="Saier M.H. Jr."/>
            <person name="Hancock R.E.W."/>
            <person name="Lory S."/>
            <person name="Olson M.V."/>
        </authorList>
    </citation>
    <scope>NUCLEOTIDE SEQUENCE [LARGE SCALE GENOMIC DNA]</scope>
    <source>
        <strain>ATCC 15692 / DSM 22644 / CIP 104116 / JCM 14847 / LMG 12228 / 1C / PRS 101 / PAO1</strain>
    </source>
</reference>
<reference key="4">
    <citation type="submission" date="1993-08" db="EMBL/GenBank/DDBJ databases">
        <authorList>
            <person name="Deretic V."/>
        </authorList>
    </citation>
    <scope>IDENTIFICATION</scope>
</reference>
<evidence type="ECO:0000255" key="1">
    <source>
        <dbReference type="PROSITE-ProRule" id="PRU00277"/>
    </source>
</evidence>
<evidence type="ECO:0000305" key="2"/>
<gene>
    <name type="primary">fkl</name>
    <name type="ordered locus">PA5254</name>
</gene>
<dbReference type="EC" id="5.2.1.8"/>
<dbReference type="EMBL" id="M30145">
    <property type="status" value="NOT_ANNOTATED_CDS"/>
    <property type="molecule type" value="Genomic_DNA"/>
</dbReference>
<dbReference type="EMBL" id="M32077">
    <property type="protein sequence ID" value="AAA72067.1"/>
    <property type="status" value="ALT_SEQ"/>
    <property type="molecule type" value="Unassigned_DNA"/>
</dbReference>
<dbReference type="EMBL" id="AE004091">
    <property type="protein sequence ID" value="AAG08639.1"/>
    <property type="status" value="ALT_INIT"/>
    <property type="molecule type" value="Genomic_DNA"/>
</dbReference>
<dbReference type="PIR" id="D82988">
    <property type="entry name" value="D82988"/>
</dbReference>
<dbReference type="PIR" id="JQ0140">
    <property type="entry name" value="JQ0140"/>
</dbReference>
<dbReference type="RefSeq" id="NP_253941.1">
    <property type="nucleotide sequence ID" value="NC_002516.2"/>
</dbReference>
<dbReference type="SMR" id="P30417"/>
<dbReference type="STRING" id="208964.PA5254"/>
<dbReference type="PaxDb" id="208964-PA5254"/>
<dbReference type="GeneID" id="880807"/>
<dbReference type="KEGG" id="pae:PA5254"/>
<dbReference type="PATRIC" id="fig|208964.12.peg.5507"/>
<dbReference type="PseudoCAP" id="PA5254"/>
<dbReference type="HOGENOM" id="CLU_013615_0_3_6"/>
<dbReference type="InParanoid" id="P30417"/>
<dbReference type="OrthoDB" id="9814548at2"/>
<dbReference type="PhylomeDB" id="P30417"/>
<dbReference type="Proteomes" id="UP000002438">
    <property type="component" value="Chromosome"/>
</dbReference>
<dbReference type="GO" id="GO:0003755">
    <property type="term" value="F:peptidyl-prolyl cis-trans isomerase activity"/>
    <property type="evidence" value="ECO:0000318"/>
    <property type="project" value="GO_Central"/>
</dbReference>
<dbReference type="GO" id="GO:0006457">
    <property type="term" value="P:protein folding"/>
    <property type="evidence" value="ECO:0007669"/>
    <property type="project" value="InterPro"/>
</dbReference>
<dbReference type="Gene3D" id="3.10.50.40">
    <property type="match status" value="1"/>
</dbReference>
<dbReference type="Gene3D" id="1.10.287.460">
    <property type="entry name" value="Peptidyl-prolyl cis-trans isomerase, FKBP-type, N-terminal domain"/>
    <property type="match status" value="1"/>
</dbReference>
<dbReference type="InterPro" id="IPR046357">
    <property type="entry name" value="PPIase_dom_sf"/>
</dbReference>
<dbReference type="InterPro" id="IPR001179">
    <property type="entry name" value="PPIase_FKBP_dom"/>
</dbReference>
<dbReference type="InterPro" id="IPR000774">
    <property type="entry name" value="PPIase_FKBP_N"/>
</dbReference>
<dbReference type="InterPro" id="IPR036944">
    <property type="entry name" value="PPIase_FKBP_N_sf"/>
</dbReference>
<dbReference type="PANTHER" id="PTHR43811:SF23">
    <property type="entry name" value="FKBP-TYPE 22 KDA PEPTIDYL-PROLYL CIS-TRANS ISOMERASE"/>
    <property type="match status" value="1"/>
</dbReference>
<dbReference type="PANTHER" id="PTHR43811">
    <property type="entry name" value="FKBP-TYPE PEPTIDYL-PROLYL CIS-TRANS ISOMERASE FKPA"/>
    <property type="match status" value="1"/>
</dbReference>
<dbReference type="Pfam" id="PF00254">
    <property type="entry name" value="FKBP_C"/>
    <property type="match status" value="1"/>
</dbReference>
<dbReference type="Pfam" id="PF01346">
    <property type="entry name" value="FKBP_N"/>
    <property type="match status" value="1"/>
</dbReference>
<dbReference type="SUPFAM" id="SSF54534">
    <property type="entry name" value="FKBP-like"/>
    <property type="match status" value="1"/>
</dbReference>
<dbReference type="PROSITE" id="PS50059">
    <property type="entry name" value="FKBP_PPIASE"/>
    <property type="match status" value="1"/>
</dbReference>
<accession>P30417</accession>
<accession>Q9HTU0</accession>
<proteinExistence type="inferred from homology"/>
<protein>
    <recommendedName>
        <fullName>Probable FKBP-type 25 kDa peptidyl-prolyl cis-trans isomerase</fullName>
        <shortName>PPIase</shortName>
        <ecNumber>5.2.1.8</ecNumber>
    </recommendedName>
    <alternativeName>
        <fullName>Rotamase</fullName>
    </alternativeName>
</protein>
<organism>
    <name type="scientific">Pseudomonas aeruginosa (strain ATCC 15692 / DSM 22644 / CIP 104116 / JCM 14847 / LMG 12228 / 1C / PRS 101 / PAO1)</name>
    <dbReference type="NCBI Taxonomy" id="208964"/>
    <lineage>
        <taxon>Bacteria</taxon>
        <taxon>Pseudomonadati</taxon>
        <taxon>Pseudomonadota</taxon>
        <taxon>Gammaproteobacteria</taxon>
        <taxon>Pseudomonadales</taxon>
        <taxon>Pseudomonadaceae</taxon>
        <taxon>Pseudomonas</taxon>
    </lineage>
</organism>
<feature type="chain" id="PRO_0000075375" description="Probable FKBP-type 25 kDa peptidyl-prolyl cis-trans isomerase">
    <location>
        <begin position="1"/>
        <end position="227"/>
    </location>
</feature>
<feature type="domain" description="PPIase FKBP-type" evidence="1">
    <location>
        <begin position="144"/>
        <end position="227"/>
    </location>
</feature>
<feature type="sequence conflict" description="In Ref. 1." evidence="2" ref="1">
    <original>M</original>
    <variation>T</variation>
    <location>
        <position position="53"/>
    </location>
</feature>
<feature type="sequence conflict" description="In Ref. 1." evidence="2" ref="1">
    <original>G</original>
    <variation>D</variation>
    <location>
        <position position="61"/>
    </location>
</feature>
<feature type="sequence conflict" description="In Ref. 1." evidence="2" ref="1">
    <original>T</original>
    <variation>I</variation>
    <location>
        <position position="104"/>
    </location>
</feature>
<comment type="function">
    <text>PPIases accelerate the folding of proteins.</text>
</comment>
<comment type="catalytic activity">
    <reaction>
        <text>[protein]-peptidylproline (omega=180) = [protein]-peptidylproline (omega=0)</text>
        <dbReference type="Rhea" id="RHEA:16237"/>
        <dbReference type="Rhea" id="RHEA-COMP:10747"/>
        <dbReference type="Rhea" id="RHEA-COMP:10748"/>
        <dbReference type="ChEBI" id="CHEBI:83833"/>
        <dbReference type="ChEBI" id="CHEBI:83834"/>
        <dbReference type="EC" id="5.2.1.8"/>
    </reaction>
</comment>
<comment type="similarity">
    <text evidence="2">Belongs to the FKBP-type PPIase family.</text>
</comment>
<comment type="caution">
    <text evidence="2">It is uncertain whether Met-1 or Met-19 is the initiator.</text>
</comment>
<comment type="sequence caution" evidence="2">
    <conflict type="erroneous initiation">
        <sequence resource="EMBL-CDS" id="AAG08639"/>
    </conflict>
</comment>